<evidence type="ECO:0000255" key="1">
    <source>
        <dbReference type="HAMAP-Rule" id="MF_00581"/>
    </source>
</evidence>
<sequence>MSQNHTILQNLPVGQKVGIAFSGGLDTSAALLWMKLKGALPYAYTANLGQPDEDDYNAIPKKAMEYGAENARLIDCRAQLAHEGIAAIQCGAFHVSTGGIAYFNTTPLGRAVTGTMLVSAMKEDDVNIWGDGSTYKGNDIERFYRYGLLTNPALKIYKPWLDQQFIDELGGRHEMSEFLIANGFNYKMSVEKAYSTDSNMLGATHEAKDLEFLNSGIKIVKPIMGVAFWDENVEVSPEEVSVRFEEGVPVALNGKEYADPVELFLEANRIGGRHGLGMSDQIENRIIEAKSRGIYEAPGMALFHIAYERLVTGIHNEDTIEQYRINGLRLGRLLYQGRWFDSQALMLRETAQRWVAKAVTGEVTLELRRGNDYSILNTESPNLTYQPERLSMEKVEGAAFTPLDRIGQLTMRNLDITDTRAKLGIYSQSGLLSLGEGSVLPQLGNKK</sequence>
<organism>
    <name type="scientific">Neisseria meningitidis serogroup C / serotype 2a (strain ATCC 700532 / DSM 15464 / FAM18)</name>
    <dbReference type="NCBI Taxonomy" id="272831"/>
    <lineage>
        <taxon>Bacteria</taxon>
        <taxon>Pseudomonadati</taxon>
        <taxon>Pseudomonadota</taxon>
        <taxon>Betaproteobacteria</taxon>
        <taxon>Neisseriales</taxon>
        <taxon>Neisseriaceae</taxon>
        <taxon>Neisseria</taxon>
    </lineage>
</organism>
<keyword id="KW-0028">Amino-acid biosynthesis</keyword>
<keyword id="KW-0055">Arginine biosynthesis</keyword>
<keyword id="KW-0067">ATP-binding</keyword>
<keyword id="KW-0963">Cytoplasm</keyword>
<keyword id="KW-0436">Ligase</keyword>
<keyword id="KW-0547">Nucleotide-binding</keyword>
<reference key="1">
    <citation type="journal article" date="2007" name="PLoS Genet.">
        <title>Meningococcal genetic variation mechanisms viewed through comparative analysis of serogroup C strain FAM18.</title>
        <authorList>
            <person name="Bentley S.D."/>
            <person name="Vernikos G.S."/>
            <person name="Snyder L.A.S."/>
            <person name="Churcher C."/>
            <person name="Arrowsmith C."/>
            <person name="Chillingworth T."/>
            <person name="Cronin A."/>
            <person name="Davis P.H."/>
            <person name="Holroyd N.E."/>
            <person name="Jagels K."/>
            <person name="Maddison M."/>
            <person name="Moule S."/>
            <person name="Rabbinowitsch E."/>
            <person name="Sharp S."/>
            <person name="Unwin L."/>
            <person name="Whitehead S."/>
            <person name="Quail M.A."/>
            <person name="Achtman M."/>
            <person name="Barrell B.G."/>
            <person name="Saunders N.J."/>
            <person name="Parkhill J."/>
        </authorList>
    </citation>
    <scope>NUCLEOTIDE SEQUENCE [LARGE SCALE GENOMIC DNA]</scope>
    <source>
        <strain>ATCC 700532 / DSM 15464 / FAM18</strain>
    </source>
</reference>
<feature type="chain" id="PRO_1000025434" description="Argininosuccinate synthase">
    <location>
        <begin position="1"/>
        <end position="447"/>
    </location>
</feature>
<feature type="binding site" evidence="1">
    <location>
        <begin position="20"/>
        <end position="28"/>
    </location>
    <ligand>
        <name>ATP</name>
        <dbReference type="ChEBI" id="CHEBI:30616"/>
    </ligand>
</feature>
<feature type="binding site" evidence="1">
    <location>
        <position position="46"/>
    </location>
    <ligand>
        <name>ATP</name>
        <dbReference type="ChEBI" id="CHEBI:30616"/>
    </ligand>
</feature>
<feature type="binding site" evidence="1">
    <location>
        <position position="102"/>
    </location>
    <ligand>
        <name>L-citrulline</name>
        <dbReference type="ChEBI" id="CHEBI:57743"/>
    </ligand>
</feature>
<feature type="binding site" evidence="1">
    <location>
        <position position="132"/>
    </location>
    <ligand>
        <name>ATP</name>
        <dbReference type="ChEBI" id="CHEBI:30616"/>
    </ligand>
</feature>
<feature type="binding site" evidence="1">
    <location>
        <position position="134"/>
    </location>
    <ligand>
        <name>ATP</name>
        <dbReference type="ChEBI" id="CHEBI:30616"/>
    </ligand>
</feature>
<feature type="binding site" evidence="1">
    <location>
        <position position="134"/>
    </location>
    <ligand>
        <name>L-aspartate</name>
        <dbReference type="ChEBI" id="CHEBI:29991"/>
    </ligand>
</feature>
<feature type="binding site" evidence="1">
    <location>
        <position position="138"/>
    </location>
    <ligand>
        <name>L-aspartate</name>
        <dbReference type="ChEBI" id="CHEBI:29991"/>
    </ligand>
</feature>
<feature type="binding site" evidence="1">
    <location>
        <position position="138"/>
    </location>
    <ligand>
        <name>L-citrulline</name>
        <dbReference type="ChEBI" id="CHEBI:57743"/>
    </ligand>
</feature>
<feature type="binding site" evidence="1">
    <location>
        <position position="139"/>
    </location>
    <ligand>
        <name>ATP</name>
        <dbReference type="ChEBI" id="CHEBI:30616"/>
    </ligand>
</feature>
<feature type="binding site" evidence="1">
    <location>
        <position position="139"/>
    </location>
    <ligand>
        <name>L-aspartate</name>
        <dbReference type="ChEBI" id="CHEBI:29991"/>
    </ligand>
</feature>
<feature type="binding site" evidence="1">
    <location>
        <position position="142"/>
    </location>
    <ligand>
        <name>L-citrulline</name>
        <dbReference type="ChEBI" id="CHEBI:57743"/>
    </ligand>
</feature>
<feature type="binding site" evidence="1">
    <location>
        <position position="195"/>
    </location>
    <ligand>
        <name>L-citrulline</name>
        <dbReference type="ChEBI" id="CHEBI:57743"/>
    </ligand>
</feature>
<feature type="binding site" evidence="1">
    <location>
        <position position="197"/>
    </location>
    <ligand>
        <name>ATP</name>
        <dbReference type="ChEBI" id="CHEBI:30616"/>
    </ligand>
</feature>
<feature type="binding site" evidence="1">
    <location>
        <position position="204"/>
    </location>
    <ligand>
        <name>L-citrulline</name>
        <dbReference type="ChEBI" id="CHEBI:57743"/>
    </ligand>
</feature>
<feature type="binding site" evidence="1">
    <location>
        <position position="206"/>
    </location>
    <ligand>
        <name>L-citrulline</name>
        <dbReference type="ChEBI" id="CHEBI:57743"/>
    </ligand>
</feature>
<feature type="binding site" evidence="1">
    <location>
        <position position="283"/>
    </location>
    <ligand>
        <name>L-citrulline</name>
        <dbReference type="ChEBI" id="CHEBI:57743"/>
    </ligand>
</feature>
<dbReference type="EC" id="6.3.4.5" evidence="1"/>
<dbReference type="EMBL" id="AM421808">
    <property type="protein sequence ID" value="CAM11258.1"/>
    <property type="molecule type" value="Genomic_DNA"/>
</dbReference>
<dbReference type="RefSeq" id="WP_002221728.1">
    <property type="nucleotide sequence ID" value="NC_008767.1"/>
</dbReference>
<dbReference type="SMR" id="A1KWJ8"/>
<dbReference type="KEGG" id="nmc:NMC2106"/>
<dbReference type="HOGENOM" id="CLU_032784_4_1_4"/>
<dbReference type="UniPathway" id="UPA00068">
    <property type="reaction ID" value="UER00113"/>
</dbReference>
<dbReference type="Proteomes" id="UP000002286">
    <property type="component" value="Chromosome"/>
</dbReference>
<dbReference type="GO" id="GO:0005737">
    <property type="term" value="C:cytoplasm"/>
    <property type="evidence" value="ECO:0007669"/>
    <property type="project" value="UniProtKB-SubCell"/>
</dbReference>
<dbReference type="GO" id="GO:0004055">
    <property type="term" value="F:argininosuccinate synthase activity"/>
    <property type="evidence" value="ECO:0007669"/>
    <property type="project" value="UniProtKB-UniRule"/>
</dbReference>
<dbReference type="GO" id="GO:0005524">
    <property type="term" value="F:ATP binding"/>
    <property type="evidence" value="ECO:0007669"/>
    <property type="project" value="UniProtKB-UniRule"/>
</dbReference>
<dbReference type="GO" id="GO:0042803">
    <property type="term" value="F:protein homodimerization activity"/>
    <property type="evidence" value="ECO:0007669"/>
    <property type="project" value="InterPro"/>
</dbReference>
<dbReference type="GO" id="GO:0000053">
    <property type="term" value="P:argininosuccinate metabolic process"/>
    <property type="evidence" value="ECO:0007669"/>
    <property type="project" value="TreeGrafter"/>
</dbReference>
<dbReference type="GO" id="GO:0006526">
    <property type="term" value="P:L-arginine biosynthetic process"/>
    <property type="evidence" value="ECO:0007669"/>
    <property type="project" value="UniProtKB-UniRule"/>
</dbReference>
<dbReference type="GO" id="GO:0000050">
    <property type="term" value="P:urea cycle"/>
    <property type="evidence" value="ECO:0007669"/>
    <property type="project" value="TreeGrafter"/>
</dbReference>
<dbReference type="CDD" id="cd01999">
    <property type="entry name" value="ASS"/>
    <property type="match status" value="1"/>
</dbReference>
<dbReference type="FunFam" id="1.10.287.400:FF:000001">
    <property type="entry name" value="Argininosuccinate synthase"/>
    <property type="match status" value="1"/>
</dbReference>
<dbReference type="Gene3D" id="1.10.287.400">
    <property type="match status" value="1"/>
</dbReference>
<dbReference type="Gene3D" id="3.90.1260.10">
    <property type="entry name" value="Argininosuccinate synthetase, chain A, domain 2"/>
    <property type="match status" value="1"/>
</dbReference>
<dbReference type="Gene3D" id="3.40.50.620">
    <property type="entry name" value="HUPs"/>
    <property type="match status" value="1"/>
</dbReference>
<dbReference type="HAMAP" id="MF_00581">
    <property type="entry name" value="Arg_succ_synth_type2"/>
    <property type="match status" value="1"/>
</dbReference>
<dbReference type="InterPro" id="IPR023437">
    <property type="entry name" value="Arg_succ_synth_type2_subfam"/>
</dbReference>
<dbReference type="InterPro" id="IPR048268">
    <property type="entry name" value="Arginosuc_syn_C"/>
</dbReference>
<dbReference type="InterPro" id="IPR048267">
    <property type="entry name" value="Arginosuc_syn_N"/>
</dbReference>
<dbReference type="InterPro" id="IPR001518">
    <property type="entry name" value="Arginosuc_synth"/>
</dbReference>
<dbReference type="InterPro" id="IPR018223">
    <property type="entry name" value="Arginosuc_synth_CS"/>
</dbReference>
<dbReference type="InterPro" id="IPR023434">
    <property type="entry name" value="Arginosuc_synth_type_1_subfam"/>
</dbReference>
<dbReference type="InterPro" id="IPR024074">
    <property type="entry name" value="AS_cat/multimer_dom_body"/>
</dbReference>
<dbReference type="InterPro" id="IPR024073">
    <property type="entry name" value="AS_multimer_C_tail"/>
</dbReference>
<dbReference type="InterPro" id="IPR014729">
    <property type="entry name" value="Rossmann-like_a/b/a_fold"/>
</dbReference>
<dbReference type="NCBIfam" id="TIGR00032">
    <property type="entry name" value="argG"/>
    <property type="match status" value="1"/>
</dbReference>
<dbReference type="NCBIfam" id="NF003779">
    <property type="entry name" value="PRK05370.1"/>
    <property type="match status" value="1"/>
</dbReference>
<dbReference type="PANTHER" id="PTHR11587">
    <property type="entry name" value="ARGININOSUCCINATE SYNTHASE"/>
    <property type="match status" value="1"/>
</dbReference>
<dbReference type="PANTHER" id="PTHR11587:SF2">
    <property type="entry name" value="ARGININOSUCCINATE SYNTHASE"/>
    <property type="match status" value="1"/>
</dbReference>
<dbReference type="Pfam" id="PF20979">
    <property type="entry name" value="Arginosuc_syn_C"/>
    <property type="match status" value="1"/>
</dbReference>
<dbReference type="Pfam" id="PF00764">
    <property type="entry name" value="Arginosuc_synth"/>
    <property type="match status" value="1"/>
</dbReference>
<dbReference type="SUPFAM" id="SSF52402">
    <property type="entry name" value="Adenine nucleotide alpha hydrolases-like"/>
    <property type="match status" value="1"/>
</dbReference>
<dbReference type="SUPFAM" id="SSF69864">
    <property type="entry name" value="Argininosuccinate synthetase, C-terminal domain"/>
    <property type="match status" value="1"/>
</dbReference>
<dbReference type="PROSITE" id="PS00564">
    <property type="entry name" value="ARGININOSUCCIN_SYN_1"/>
    <property type="match status" value="1"/>
</dbReference>
<dbReference type="PROSITE" id="PS00565">
    <property type="entry name" value="ARGININOSUCCIN_SYN_2"/>
    <property type="match status" value="1"/>
</dbReference>
<proteinExistence type="inferred from homology"/>
<protein>
    <recommendedName>
        <fullName evidence="1">Argininosuccinate synthase</fullName>
        <ecNumber evidence="1">6.3.4.5</ecNumber>
    </recommendedName>
    <alternativeName>
        <fullName evidence="1">Citrulline--aspartate ligase</fullName>
    </alternativeName>
</protein>
<name>ASSY_NEIMF</name>
<accession>A1KWJ8</accession>
<gene>
    <name evidence="1" type="primary">argG</name>
    <name type="ordered locus">NMC2106</name>
</gene>
<comment type="catalytic activity">
    <reaction evidence="1">
        <text>L-citrulline + L-aspartate + ATP = 2-(N(omega)-L-arginino)succinate + AMP + diphosphate + H(+)</text>
        <dbReference type="Rhea" id="RHEA:10932"/>
        <dbReference type="ChEBI" id="CHEBI:15378"/>
        <dbReference type="ChEBI" id="CHEBI:29991"/>
        <dbReference type="ChEBI" id="CHEBI:30616"/>
        <dbReference type="ChEBI" id="CHEBI:33019"/>
        <dbReference type="ChEBI" id="CHEBI:57472"/>
        <dbReference type="ChEBI" id="CHEBI:57743"/>
        <dbReference type="ChEBI" id="CHEBI:456215"/>
        <dbReference type="EC" id="6.3.4.5"/>
    </reaction>
</comment>
<comment type="pathway">
    <text evidence="1">Amino-acid biosynthesis; L-arginine biosynthesis; L-arginine from L-ornithine and carbamoyl phosphate: step 2/3.</text>
</comment>
<comment type="subunit">
    <text evidence="1">Homotetramer.</text>
</comment>
<comment type="subcellular location">
    <subcellularLocation>
        <location evidence="1">Cytoplasm</location>
    </subcellularLocation>
</comment>
<comment type="similarity">
    <text evidence="1">Belongs to the argininosuccinate synthase family. Type 2 subfamily.</text>
</comment>